<protein>
    <recommendedName>
        <fullName evidence="1">5-amino-6-(D-ribitylamino)uracil--L-tyrosine 4-hydroxyphenyl transferase</fullName>
        <ecNumber evidence="1">2.5.1.147</ecNumber>
    </recommendedName>
    <alternativeName>
        <fullName evidence="1">FO synthase subunit 2</fullName>
    </alternativeName>
</protein>
<accession>Q8DII8</accession>
<feature type="chain" id="PRO_0000141710" description="5-amino-6-(D-ribitylamino)uracil--L-tyrosine 4-hydroxyphenyl transferase">
    <location>
        <begin position="1"/>
        <end position="393"/>
    </location>
</feature>
<feature type="domain" description="Radical SAM core" evidence="2">
    <location>
        <begin position="67"/>
        <end position="322"/>
    </location>
</feature>
<feature type="binding site" evidence="1">
    <location>
        <position position="81"/>
    </location>
    <ligand>
        <name>[4Fe-4S] cluster</name>
        <dbReference type="ChEBI" id="CHEBI:49883"/>
        <note>4Fe-4S-S-AdoMet</note>
    </ligand>
</feature>
<feature type="binding site" evidence="1">
    <location>
        <position position="85"/>
    </location>
    <ligand>
        <name>[4Fe-4S] cluster</name>
        <dbReference type="ChEBI" id="CHEBI:49883"/>
        <note>4Fe-4S-S-AdoMet</note>
    </ligand>
</feature>
<feature type="binding site" evidence="1">
    <location>
        <position position="88"/>
    </location>
    <ligand>
        <name>[4Fe-4S] cluster</name>
        <dbReference type="ChEBI" id="CHEBI:49883"/>
        <note>4Fe-4S-S-AdoMet</note>
    </ligand>
</feature>
<dbReference type="EC" id="2.5.1.147" evidence="1"/>
<dbReference type="EMBL" id="BA000039">
    <property type="protein sequence ID" value="BAC09149.1"/>
    <property type="molecule type" value="Genomic_DNA"/>
</dbReference>
<dbReference type="RefSeq" id="NP_682387.1">
    <property type="nucleotide sequence ID" value="NC_004113.1"/>
</dbReference>
<dbReference type="RefSeq" id="WP_011057436.1">
    <property type="nucleotide sequence ID" value="NC_004113.1"/>
</dbReference>
<dbReference type="SMR" id="Q8DII8"/>
<dbReference type="STRING" id="197221.gene:10748199"/>
<dbReference type="EnsemblBacteria" id="BAC09149">
    <property type="protein sequence ID" value="BAC09149"/>
    <property type="gene ID" value="BAC09149"/>
</dbReference>
<dbReference type="KEGG" id="tel:tlr1597"/>
<dbReference type="PATRIC" id="fig|197221.4.peg.1675"/>
<dbReference type="eggNOG" id="COG1060">
    <property type="taxonomic scope" value="Bacteria"/>
</dbReference>
<dbReference type="UniPathway" id="UPA00072"/>
<dbReference type="Proteomes" id="UP000000440">
    <property type="component" value="Chromosome"/>
</dbReference>
<dbReference type="GO" id="GO:0051539">
    <property type="term" value="F:4 iron, 4 sulfur cluster binding"/>
    <property type="evidence" value="ECO:0007669"/>
    <property type="project" value="UniProtKB-KW"/>
</dbReference>
<dbReference type="GO" id="GO:0141093">
    <property type="term" value="F:5-amino-6-(D-ribitylamino)uracil--L-tyrosine 4-hydroxyphenyl transferase activity"/>
    <property type="evidence" value="ECO:0007669"/>
    <property type="project" value="UniProtKB-EC"/>
</dbReference>
<dbReference type="GO" id="GO:0044689">
    <property type="term" value="F:7,8-didemethyl-8-hydroxy-5-deazariboflavin synthase activity"/>
    <property type="evidence" value="ECO:0007669"/>
    <property type="project" value="TreeGrafter"/>
</dbReference>
<dbReference type="GO" id="GO:0005506">
    <property type="term" value="F:iron ion binding"/>
    <property type="evidence" value="ECO:0007669"/>
    <property type="project" value="UniProtKB-UniRule"/>
</dbReference>
<dbReference type="CDD" id="cd01335">
    <property type="entry name" value="Radical_SAM"/>
    <property type="match status" value="1"/>
</dbReference>
<dbReference type="Gene3D" id="3.20.20.70">
    <property type="entry name" value="Aldolase class I"/>
    <property type="match status" value="1"/>
</dbReference>
<dbReference type="HAMAP" id="MF_01612">
    <property type="entry name" value="FO_synth_sub2"/>
    <property type="match status" value="1"/>
</dbReference>
<dbReference type="InterPro" id="IPR013785">
    <property type="entry name" value="Aldolase_TIM"/>
</dbReference>
<dbReference type="InterPro" id="IPR045567">
    <property type="entry name" value="CofH/MnqC-like_C"/>
</dbReference>
<dbReference type="InterPro" id="IPR019940">
    <property type="entry name" value="CofH_family"/>
</dbReference>
<dbReference type="InterPro" id="IPR034405">
    <property type="entry name" value="F420"/>
</dbReference>
<dbReference type="InterPro" id="IPR020050">
    <property type="entry name" value="FO_synthase_su2"/>
</dbReference>
<dbReference type="InterPro" id="IPR007197">
    <property type="entry name" value="rSAM"/>
</dbReference>
<dbReference type="NCBIfam" id="TIGR00423">
    <property type="entry name" value="CofH family radical SAM protein"/>
    <property type="match status" value="1"/>
</dbReference>
<dbReference type="NCBIfam" id="TIGR03551">
    <property type="entry name" value="F420_cofH"/>
    <property type="match status" value="1"/>
</dbReference>
<dbReference type="NCBIfam" id="NF005609">
    <property type="entry name" value="PRK07360.1"/>
    <property type="match status" value="1"/>
</dbReference>
<dbReference type="PANTHER" id="PTHR43076">
    <property type="entry name" value="FO SYNTHASE (COFH)"/>
    <property type="match status" value="1"/>
</dbReference>
<dbReference type="PANTHER" id="PTHR43076:SF1">
    <property type="entry name" value="LIPOYL SYNTHASE 2"/>
    <property type="match status" value="1"/>
</dbReference>
<dbReference type="Pfam" id="PF19288">
    <property type="entry name" value="CofH_C"/>
    <property type="match status" value="1"/>
</dbReference>
<dbReference type="Pfam" id="PF04055">
    <property type="entry name" value="Radical_SAM"/>
    <property type="match status" value="1"/>
</dbReference>
<dbReference type="PIRSF" id="PIRSF004762">
    <property type="entry name" value="CHP00423"/>
    <property type="match status" value="1"/>
</dbReference>
<dbReference type="SFLD" id="SFLDF00293">
    <property type="entry name" value="((2_3_4_5-tetrahydroxypentyl)a"/>
    <property type="match status" value="1"/>
</dbReference>
<dbReference type="SFLD" id="SFLDG01064">
    <property type="entry name" value="F420__menaquinone_cofactor_bio"/>
    <property type="match status" value="1"/>
</dbReference>
<dbReference type="SFLD" id="SFLDG01389">
    <property type="entry name" value="menaquinone_synthsis_involved"/>
    <property type="match status" value="1"/>
</dbReference>
<dbReference type="SFLD" id="SFLDS00029">
    <property type="entry name" value="Radical_SAM"/>
    <property type="match status" value="1"/>
</dbReference>
<dbReference type="SUPFAM" id="SSF102114">
    <property type="entry name" value="Radical SAM enzymes"/>
    <property type="match status" value="1"/>
</dbReference>
<dbReference type="PROSITE" id="PS51918">
    <property type="entry name" value="RADICAL_SAM"/>
    <property type="match status" value="1"/>
</dbReference>
<comment type="function">
    <text evidence="1">Catalyzes the radical-mediated synthesis of 5-amino-5-(4-hydroxybenzyl)-6-(D-ribitylimino)-5,6-dihydrouracil from 5-amino-6-(D-ribitylamino)uracil and L-tyrosine.</text>
</comment>
<comment type="catalytic activity">
    <reaction evidence="1">
        <text>5-amino-6-(D-ribitylamino)uracil + L-tyrosine + S-adenosyl-L-methionine = 5-amino-5-(4-hydroxybenzyl)-6-(D-ribitylimino)-5,6-dihydrouracil + 2-iminoacetate + 5'-deoxyadenosine + L-methionine + H(+)</text>
        <dbReference type="Rhea" id="RHEA:55200"/>
        <dbReference type="ChEBI" id="CHEBI:15378"/>
        <dbReference type="ChEBI" id="CHEBI:15934"/>
        <dbReference type="ChEBI" id="CHEBI:17319"/>
        <dbReference type="ChEBI" id="CHEBI:57844"/>
        <dbReference type="ChEBI" id="CHEBI:58315"/>
        <dbReference type="ChEBI" id="CHEBI:59789"/>
        <dbReference type="ChEBI" id="CHEBI:77846"/>
        <dbReference type="ChEBI" id="CHEBI:85936"/>
        <dbReference type="EC" id="2.5.1.147"/>
    </reaction>
</comment>
<comment type="cofactor">
    <cofactor evidence="1">
        <name>[4Fe-4S] cluster</name>
        <dbReference type="ChEBI" id="CHEBI:49883"/>
    </cofactor>
    <text evidence="1">Binds 1 [4Fe-4S] cluster. The cluster is coordinated with 3 cysteines and an exchangeable S-adenosyl-L-methionine.</text>
</comment>
<comment type="pathway">
    <text evidence="1">Cofactor biosynthesis; coenzyme F0 biosynthesis.</text>
</comment>
<comment type="subunit">
    <text evidence="1">Consists of two subunits, CofG and CofH.</text>
</comment>
<comment type="similarity">
    <text evidence="1">Belongs to the radical SAM superfamily. CofH family.</text>
</comment>
<name>COFH_THEVB</name>
<sequence>MQTIAAIAKLEEILTNNGISAQQALALLTTALPLATTSDPQEPLPPLLRALQTASDRLRQQQVGDTVTYVINRNINFTNICEQHCAFCAFRRDATASDAYWLNIETILSKVAEAVAQGATEICMQGGLNPAAKEGGSSLRYYQFLVREIKTAFPQIHLHAFSPQEIQFIAREDGCSYAQVIAALHEVGVDSMPGTAAEVLVDAVRSKICPEKIRTATWLEIVETAHRLGVWTTSTMLCGHIETPADQMAHLQHLQQLQQKALEHDYPARITEFILLPYVGELAPKAMRQWVGHHQPRLLPTLVLTAVARLFLGQWIVNHQPSWVKLGLRGATMALNWGCNDLGGTLMEEHITSVAGAQGGTGVSPEDLVAAIHSLGRTPQQRTTLYNPVGERQ</sequence>
<reference key="1">
    <citation type="journal article" date="2002" name="DNA Res.">
        <title>Complete genome structure of the thermophilic cyanobacterium Thermosynechococcus elongatus BP-1.</title>
        <authorList>
            <person name="Nakamura Y."/>
            <person name="Kaneko T."/>
            <person name="Sato S."/>
            <person name="Ikeuchi M."/>
            <person name="Katoh H."/>
            <person name="Sasamoto S."/>
            <person name="Watanabe A."/>
            <person name="Iriguchi M."/>
            <person name="Kawashima K."/>
            <person name="Kimura T."/>
            <person name="Kishida Y."/>
            <person name="Kiyokawa C."/>
            <person name="Kohara M."/>
            <person name="Matsumoto M."/>
            <person name="Matsuno A."/>
            <person name="Nakazaki N."/>
            <person name="Shimpo S."/>
            <person name="Sugimoto M."/>
            <person name="Takeuchi C."/>
            <person name="Yamada M."/>
            <person name="Tabata S."/>
        </authorList>
    </citation>
    <scope>NUCLEOTIDE SEQUENCE [LARGE SCALE GENOMIC DNA]</scope>
    <source>
        <strain>NIES-2133 / IAM M-273 / BP-1</strain>
    </source>
</reference>
<gene>
    <name evidence="1" type="primary">cofH</name>
    <name type="ordered locus">tlr1597</name>
</gene>
<keyword id="KW-0004">4Fe-4S</keyword>
<keyword id="KW-0408">Iron</keyword>
<keyword id="KW-0411">Iron-sulfur</keyword>
<keyword id="KW-0479">Metal-binding</keyword>
<keyword id="KW-1185">Reference proteome</keyword>
<keyword id="KW-0949">S-adenosyl-L-methionine</keyword>
<keyword id="KW-0808">Transferase</keyword>
<organism>
    <name type="scientific">Thermosynechococcus vestitus (strain NIES-2133 / IAM M-273 / BP-1)</name>
    <dbReference type="NCBI Taxonomy" id="197221"/>
    <lineage>
        <taxon>Bacteria</taxon>
        <taxon>Bacillati</taxon>
        <taxon>Cyanobacteriota</taxon>
        <taxon>Cyanophyceae</taxon>
        <taxon>Acaryochloridales</taxon>
        <taxon>Thermosynechococcaceae</taxon>
        <taxon>Thermosynechococcus</taxon>
    </lineage>
</organism>
<evidence type="ECO:0000255" key="1">
    <source>
        <dbReference type="HAMAP-Rule" id="MF_01612"/>
    </source>
</evidence>
<evidence type="ECO:0000255" key="2">
    <source>
        <dbReference type="PROSITE-ProRule" id="PRU01266"/>
    </source>
</evidence>
<proteinExistence type="inferred from homology"/>